<organism>
    <name type="scientific">Ruegeria sp. (strain TM1040)</name>
    <name type="common">Silicibacter sp.</name>
    <dbReference type="NCBI Taxonomy" id="292414"/>
    <lineage>
        <taxon>Bacteria</taxon>
        <taxon>Pseudomonadati</taxon>
        <taxon>Pseudomonadota</taxon>
        <taxon>Alphaproteobacteria</taxon>
        <taxon>Rhodobacterales</taxon>
        <taxon>Roseobacteraceae</taxon>
        <taxon>Ruegeria</taxon>
    </lineage>
</organism>
<dbReference type="EC" id="4.2.1.11" evidence="1"/>
<dbReference type="EMBL" id="CP000377">
    <property type="protein sequence ID" value="ABF63664.1"/>
    <property type="molecule type" value="Genomic_DNA"/>
</dbReference>
<dbReference type="RefSeq" id="WP_011538274.1">
    <property type="nucleotide sequence ID" value="NC_008044.1"/>
</dbReference>
<dbReference type="SMR" id="Q1GI52"/>
<dbReference type="STRING" id="292414.TM1040_0931"/>
<dbReference type="KEGG" id="sit:TM1040_0931"/>
<dbReference type="eggNOG" id="COG0148">
    <property type="taxonomic scope" value="Bacteria"/>
</dbReference>
<dbReference type="HOGENOM" id="CLU_031223_2_1_5"/>
<dbReference type="OrthoDB" id="9804716at2"/>
<dbReference type="UniPathway" id="UPA00109">
    <property type="reaction ID" value="UER00187"/>
</dbReference>
<dbReference type="Proteomes" id="UP000000636">
    <property type="component" value="Chromosome"/>
</dbReference>
<dbReference type="GO" id="GO:0009986">
    <property type="term" value="C:cell surface"/>
    <property type="evidence" value="ECO:0007669"/>
    <property type="project" value="UniProtKB-SubCell"/>
</dbReference>
<dbReference type="GO" id="GO:0005576">
    <property type="term" value="C:extracellular region"/>
    <property type="evidence" value="ECO:0007669"/>
    <property type="project" value="UniProtKB-SubCell"/>
</dbReference>
<dbReference type="GO" id="GO:0000015">
    <property type="term" value="C:phosphopyruvate hydratase complex"/>
    <property type="evidence" value="ECO:0007669"/>
    <property type="project" value="InterPro"/>
</dbReference>
<dbReference type="GO" id="GO:0000287">
    <property type="term" value="F:magnesium ion binding"/>
    <property type="evidence" value="ECO:0007669"/>
    <property type="project" value="UniProtKB-UniRule"/>
</dbReference>
<dbReference type="GO" id="GO:0004634">
    <property type="term" value="F:phosphopyruvate hydratase activity"/>
    <property type="evidence" value="ECO:0007669"/>
    <property type="project" value="UniProtKB-UniRule"/>
</dbReference>
<dbReference type="GO" id="GO:0006096">
    <property type="term" value="P:glycolytic process"/>
    <property type="evidence" value="ECO:0007669"/>
    <property type="project" value="UniProtKB-UniRule"/>
</dbReference>
<dbReference type="CDD" id="cd03313">
    <property type="entry name" value="enolase"/>
    <property type="match status" value="1"/>
</dbReference>
<dbReference type="FunFam" id="3.20.20.120:FF:000001">
    <property type="entry name" value="Enolase"/>
    <property type="match status" value="1"/>
</dbReference>
<dbReference type="FunFam" id="3.30.390.10:FF:000001">
    <property type="entry name" value="Enolase"/>
    <property type="match status" value="1"/>
</dbReference>
<dbReference type="Gene3D" id="3.20.20.120">
    <property type="entry name" value="Enolase-like C-terminal domain"/>
    <property type="match status" value="1"/>
</dbReference>
<dbReference type="Gene3D" id="3.30.390.10">
    <property type="entry name" value="Enolase-like, N-terminal domain"/>
    <property type="match status" value="1"/>
</dbReference>
<dbReference type="HAMAP" id="MF_00318">
    <property type="entry name" value="Enolase"/>
    <property type="match status" value="1"/>
</dbReference>
<dbReference type="InterPro" id="IPR000941">
    <property type="entry name" value="Enolase"/>
</dbReference>
<dbReference type="InterPro" id="IPR036849">
    <property type="entry name" value="Enolase-like_C_sf"/>
</dbReference>
<dbReference type="InterPro" id="IPR029017">
    <property type="entry name" value="Enolase-like_N"/>
</dbReference>
<dbReference type="InterPro" id="IPR020810">
    <property type="entry name" value="Enolase_C"/>
</dbReference>
<dbReference type="InterPro" id="IPR020809">
    <property type="entry name" value="Enolase_CS"/>
</dbReference>
<dbReference type="InterPro" id="IPR020811">
    <property type="entry name" value="Enolase_N"/>
</dbReference>
<dbReference type="NCBIfam" id="TIGR01060">
    <property type="entry name" value="eno"/>
    <property type="match status" value="1"/>
</dbReference>
<dbReference type="PANTHER" id="PTHR11902">
    <property type="entry name" value="ENOLASE"/>
    <property type="match status" value="1"/>
</dbReference>
<dbReference type="PANTHER" id="PTHR11902:SF1">
    <property type="entry name" value="ENOLASE"/>
    <property type="match status" value="1"/>
</dbReference>
<dbReference type="Pfam" id="PF00113">
    <property type="entry name" value="Enolase_C"/>
    <property type="match status" value="1"/>
</dbReference>
<dbReference type="Pfam" id="PF03952">
    <property type="entry name" value="Enolase_N"/>
    <property type="match status" value="1"/>
</dbReference>
<dbReference type="PIRSF" id="PIRSF001400">
    <property type="entry name" value="Enolase"/>
    <property type="match status" value="1"/>
</dbReference>
<dbReference type="PRINTS" id="PR00148">
    <property type="entry name" value="ENOLASE"/>
</dbReference>
<dbReference type="SFLD" id="SFLDF00002">
    <property type="entry name" value="enolase"/>
    <property type="match status" value="1"/>
</dbReference>
<dbReference type="SFLD" id="SFLDG00178">
    <property type="entry name" value="enolase"/>
    <property type="match status" value="1"/>
</dbReference>
<dbReference type="SMART" id="SM01192">
    <property type="entry name" value="Enolase_C"/>
    <property type="match status" value="1"/>
</dbReference>
<dbReference type="SMART" id="SM01193">
    <property type="entry name" value="Enolase_N"/>
    <property type="match status" value="1"/>
</dbReference>
<dbReference type="SUPFAM" id="SSF51604">
    <property type="entry name" value="Enolase C-terminal domain-like"/>
    <property type="match status" value="1"/>
</dbReference>
<dbReference type="SUPFAM" id="SSF54826">
    <property type="entry name" value="Enolase N-terminal domain-like"/>
    <property type="match status" value="1"/>
</dbReference>
<dbReference type="PROSITE" id="PS00164">
    <property type="entry name" value="ENOLASE"/>
    <property type="match status" value="1"/>
</dbReference>
<gene>
    <name evidence="1" type="primary">eno</name>
    <name type="ordered locus">TM1040_0931</name>
</gene>
<keyword id="KW-0963">Cytoplasm</keyword>
<keyword id="KW-0324">Glycolysis</keyword>
<keyword id="KW-0456">Lyase</keyword>
<keyword id="KW-0460">Magnesium</keyword>
<keyword id="KW-0479">Metal-binding</keyword>
<keyword id="KW-1185">Reference proteome</keyword>
<keyword id="KW-0964">Secreted</keyword>
<feature type="chain" id="PRO_0000267107" description="Enolase">
    <location>
        <begin position="1"/>
        <end position="425"/>
    </location>
</feature>
<feature type="active site" description="Proton donor" evidence="1">
    <location>
        <position position="205"/>
    </location>
</feature>
<feature type="active site" description="Proton acceptor" evidence="1">
    <location>
        <position position="337"/>
    </location>
</feature>
<feature type="binding site" evidence="1">
    <location>
        <position position="163"/>
    </location>
    <ligand>
        <name>(2R)-2-phosphoglycerate</name>
        <dbReference type="ChEBI" id="CHEBI:58289"/>
    </ligand>
</feature>
<feature type="binding site" evidence="1">
    <location>
        <position position="242"/>
    </location>
    <ligand>
        <name>Mg(2+)</name>
        <dbReference type="ChEBI" id="CHEBI:18420"/>
    </ligand>
</feature>
<feature type="binding site" evidence="1">
    <location>
        <position position="285"/>
    </location>
    <ligand>
        <name>Mg(2+)</name>
        <dbReference type="ChEBI" id="CHEBI:18420"/>
    </ligand>
</feature>
<feature type="binding site" evidence="1">
    <location>
        <position position="312"/>
    </location>
    <ligand>
        <name>Mg(2+)</name>
        <dbReference type="ChEBI" id="CHEBI:18420"/>
    </ligand>
</feature>
<feature type="binding site" evidence="1">
    <location>
        <position position="337"/>
    </location>
    <ligand>
        <name>(2R)-2-phosphoglycerate</name>
        <dbReference type="ChEBI" id="CHEBI:58289"/>
    </ligand>
</feature>
<feature type="binding site" evidence="1">
    <location>
        <position position="366"/>
    </location>
    <ligand>
        <name>(2R)-2-phosphoglycerate</name>
        <dbReference type="ChEBI" id="CHEBI:58289"/>
    </ligand>
</feature>
<feature type="binding site" evidence="1">
    <location>
        <position position="367"/>
    </location>
    <ligand>
        <name>(2R)-2-phosphoglycerate</name>
        <dbReference type="ChEBI" id="CHEBI:58289"/>
    </ligand>
</feature>
<feature type="binding site" evidence="1">
    <location>
        <position position="388"/>
    </location>
    <ligand>
        <name>(2R)-2-phosphoglycerate</name>
        <dbReference type="ChEBI" id="CHEBI:58289"/>
    </ligand>
</feature>
<comment type="function">
    <text evidence="1">Catalyzes the reversible conversion of 2-phosphoglycerate (2-PG) into phosphoenolpyruvate (PEP). It is essential for the degradation of carbohydrates via glycolysis.</text>
</comment>
<comment type="catalytic activity">
    <reaction evidence="1">
        <text>(2R)-2-phosphoglycerate = phosphoenolpyruvate + H2O</text>
        <dbReference type="Rhea" id="RHEA:10164"/>
        <dbReference type="ChEBI" id="CHEBI:15377"/>
        <dbReference type="ChEBI" id="CHEBI:58289"/>
        <dbReference type="ChEBI" id="CHEBI:58702"/>
        <dbReference type="EC" id="4.2.1.11"/>
    </reaction>
</comment>
<comment type="cofactor">
    <cofactor evidence="1">
        <name>Mg(2+)</name>
        <dbReference type="ChEBI" id="CHEBI:18420"/>
    </cofactor>
    <text evidence="1">Binds a second Mg(2+) ion via substrate during catalysis.</text>
</comment>
<comment type="pathway">
    <text evidence="1">Carbohydrate degradation; glycolysis; pyruvate from D-glyceraldehyde 3-phosphate: step 4/5.</text>
</comment>
<comment type="subcellular location">
    <subcellularLocation>
        <location evidence="1">Cytoplasm</location>
    </subcellularLocation>
    <subcellularLocation>
        <location evidence="1">Secreted</location>
    </subcellularLocation>
    <subcellularLocation>
        <location evidence="1">Cell surface</location>
    </subcellularLocation>
    <text evidence="1">Fractions of enolase are present in both the cytoplasm and on the cell surface.</text>
</comment>
<comment type="similarity">
    <text evidence="1">Belongs to the enolase family.</text>
</comment>
<name>ENO_RUEST</name>
<protein>
    <recommendedName>
        <fullName evidence="1">Enolase</fullName>
        <ecNumber evidence="1">4.2.1.11</ecNumber>
    </recommendedName>
    <alternativeName>
        <fullName evidence="1">2-phospho-D-glycerate hydro-lyase</fullName>
    </alternativeName>
    <alternativeName>
        <fullName evidence="1">2-phosphoglycerate dehydratase</fullName>
    </alternativeName>
</protein>
<proteinExistence type="inferred from homology"/>
<sequence length="425" mass="45438">MSTIIDIHAREILDSRGNPTVEVDVVLEDGTMGRAAVPSGASTGAYEAVEKRDGDKSRYMGKGVLEAVAAVNGEIADELVGFDATEQVSIDRAMIELDGTENKGRLGANAILGVSMAVAKAAADFTTQPLYRYVGGAAARILPVPMMNIINGGEHADNPIDIQEFMIMPVAAENIRDAVRMGSEVFHTLKKELSAAGLSTGIGDEGGFAPNIASSREALDFILKSIEKAGYKPGEEIYLALDCAATEYYKDGKYVLSGEGKTLTSEENAAYLAALVNDYPIISIEDGMSEDDWDGWKALTDQIGDKVQLVGDDLFVTNPVRLAEGIERGCANSMLVKVNQIGSLTETLQAVDMAHRARYTNVMSHRSGETEDATIADLAVATNCGQIKTGSLARSDRLAKYNQLIRIEETLGEIAEYAGRSILKG</sequence>
<reference key="1">
    <citation type="submission" date="2006-05" db="EMBL/GenBank/DDBJ databases">
        <title>Complete sequence of chromosome of Silicibacter sp. TM1040.</title>
        <authorList>
            <consortium name="US DOE Joint Genome Institute"/>
            <person name="Copeland A."/>
            <person name="Lucas S."/>
            <person name="Lapidus A."/>
            <person name="Barry K."/>
            <person name="Detter J.C."/>
            <person name="Glavina del Rio T."/>
            <person name="Hammon N."/>
            <person name="Israni S."/>
            <person name="Dalin E."/>
            <person name="Tice H."/>
            <person name="Pitluck S."/>
            <person name="Brettin T."/>
            <person name="Bruce D."/>
            <person name="Han C."/>
            <person name="Tapia R."/>
            <person name="Goodwin L."/>
            <person name="Thompson L.S."/>
            <person name="Gilna P."/>
            <person name="Schmutz J."/>
            <person name="Larimer F."/>
            <person name="Land M."/>
            <person name="Hauser L."/>
            <person name="Kyrpides N."/>
            <person name="Kim E."/>
            <person name="Belas R."/>
            <person name="Moran M.A."/>
            <person name="Buchan A."/>
            <person name="Gonzalez J.M."/>
            <person name="Schell M.A."/>
            <person name="Sun F."/>
            <person name="Richardson P."/>
        </authorList>
    </citation>
    <scope>NUCLEOTIDE SEQUENCE [LARGE SCALE GENOMIC DNA]</scope>
    <source>
        <strain>TM1040</strain>
    </source>
</reference>
<accession>Q1GI52</accession>
<evidence type="ECO:0000255" key="1">
    <source>
        <dbReference type="HAMAP-Rule" id="MF_00318"/>
    </source>
</evidence>